<keyword id="KW-0878">Amphibian defense peptide</keyword>
<keyword id="KW-0044">Antibiotic</keyword>
<keyword id="KW-0929">Antimicrobial</keyword>
<keyword id="KW-0903">Direct protein sequencing</keyword>
<keyword id="KW-0964">Secreted</keyword>
<organism>
    <name type="scientific">Ranoidea splendida</name>
    <name type="common">Magnificent tree frog</name>
    <name type="synonym">Litoria splendida</name>
    <dbReference type="NCBI Taxonomy" id="30345"/>
    <lineage>
        <taxon>Eukaryota</taxon>
        <taxon>Metazoa</taxon>
        <taxon>Chordata</taxon>
        <taxon>Craniata</taxon>
        <taxon>Vertebrata</taxon>
        <taxon>Euteleostomi</taxon>
        <taxon>Amphibia</taxon>
        <taxon>Batrachia</taxon>
        <taxon>Anura</taxon>
        <taxon>Neobatrachia</taxon>
        <taxon>Hyloidea</taxon>
        <taxon>Hylidae</taxon>
        <taxon>Pelodryadinae</taxon>
        <taxon>Ranoidea</taxon>
    </lineage>
</organism>
<reference key="1">
    <citation type="journal article" date="1992" name="J. Chem. Soc. Perkin Trans. I">
        <title>Peptides from Australian frogs. Structures of the caerins and caeridin 1 from Litoria splendida.</title>
        <authorList>
            <person name="Stone D.J.M."/>
            <person name="Waugh R.J."/>
            <person name="Bowie J.H."/>
            <person name="Wallace J.C."/>
            <person name="Tyler M.J."/>
        </authorList>
    </citation>
    <scope>PROTEIN SEQUENCE</scope>
    <scope>MASS SPECTROMETRY</scope>
    <source>
        <tissue>Parotoid gland</tissue>
    </source>
</reference>
<evidence type="ECO:0000269" key="1">
    <source ref="1"/>
</evidence>
<evidence type="ECO:0000305" key="2"/>
<feature type="peptide" id="PRO_0000043742" description="Caerin-2.1">
    <location>
        <begin position="1"/>
        <end position="25"/>
    </location>
</feature>
<sequence length="25" mass="2394">GLVSSIGRALGGLLADVVKSKGQPA</sequence>
<protein>
    <recommendedName>
        <fullName>Caerin-2.1</fullName>
    </recommendedName>
</protein>
<dbReference type="GO" id="GO:0005576">
    <property type="term" value="C:extracellular region"/>
    <property type="evidence" value="ECO:0007669"/>
    <property type="project" value="UniProtKB-SubCell"/>
</dbReference>
<dbReference type="GO" id="GO:0042742">
    <property type="term" value="P:defense response to bacterium"/>
    <property type="evidence" value="ECO:0007669"/>
    <property type="project" value="UniProtKB-KW"/>
</dbReference>
<dbReference type="InterPro" id="IPR032021">
    <property type="entry name" value="Frog_Litoria"/>
</dbReference>
<dbReference type="Pfam" id="PF16049">
    <property type="entry name" value="Antimicrobial24"/>
    <property type="match status" value="1"/>
</dbReference>
<accession>P56233</accession>
<name>CR21_RANSP</name>
<proteinExistence type="evidence at protein level"/>
<comment type="function">
    <text>Antibacterial peptide, that adopts an alpha helical conformation which can disrupt bacterial membranes. Each caerin displays a different antimicrobial specificity.</text>
</comment>
<comment type="subcellular location">
    <subcellularLocation>
        <location>Secreted</location>
    </subcellularLocation>
</comment>
<comment type="tissue specificity">
    <text>Expressed by the skin parotoid and/or rostral glands.</text>
</comment>
<comment type="mass spectrometry" mass="2392.0" method="FAB" evidence="1"/>
<comment type="similarity">
    <text evidence="2">Belongs to the frog skin active peptide (FSAP) family. Caerin subfamily.</text>
</comment>